<comment type="subcellular location">
    <subcellularLocation>
        <location evidence="1">Cell membrane</location>
        <topology evidence="1">Multi-pass membrane protein</topology>
    </subcellularLocation>
</comment>
<comment type="similarity">
    <text evidence="1">Belongs to the UPF0314 family.</text>
</comment>
<feature type="chain" id="PRO_0000294261" description="UPF0314 protein Pden_1914">
    <location>
        <begin position="1"/>
        <end position="193"/>
    </location>
</feature>
<feature type="transmembrane region" description="Helical" evidence="1">
    <location>
        <begin position="13"/>
        <end position="33"/>
    </location>
</feature>
<feature type="transmembrane region" description="Helical" evidence="1">
    <location>
        <begin position="62"/>
        <end position="82"/>
    </location>
</feature>
<feature type="transmembrane region" description="Helical" evidence="1">
    <location>
        <begin position="148"/>
        <end position="168"/>
    </location>
</feature>
<feature type="transmembrane region" description="Helical" evidence="1">
    <location>
        <begin position="172"/>
        <end position="192"/>
    </location>
</feature>
<protein>
    <recommendedName>
        <fullName evidence="1">UPF0314 protein Pden_1914</fullName>
    </recommendedName>
</protein>
<keyword id="KW-1003">Cell membrane</keyword>
<keyword id="KW-0472">Membrane</keyword>
<keyword id="KW-1185">Reference proteome</keyword>
<keyword id="KW-0812">Transmembrane</keyword>
<keyword id="KW-1133">Transmembrane helix</keyword>
<accession>A1B3B4</accession>
<organism>
    <name type="scientific">Paracoccus denitrificans (strain Pd 1222)</name>
    <dbReference type="NCBI Taxonomy" id="318586"/>
    <lineage>
        <taxon>Bacteria</taxon>
        <taxon>Pseudomonadati</taxon>
        <taxon>Pseudomonadota</taxon>
        <taxon>Alphaproteobacteria</taxon>
        <taxon>Rhodobacterales</taxon>
        <taxon>Paracoccaceae</taxon>
        <taxon>Paracoccus</taxon>
    </lineage>
</organism>
<gene>
    <name type="ordered locus">Pden_1914</name>
</gene>
<dbReference type="EMBL" id="CP000489">
    <property type="protein sequence ID" value="ABL70008.1"/>
    <property type="molecule type" value="Genomic_DNA"/>
</dbReference>
<dbReference type="RefSeq" id="WP_011748205.1">
    <property type="nucleotide sequence ID" value="NC_008686.1"/>
</dbReference>
<dbReference type="STRING" id="318586.Pden_1914"/>
<dbReference type="EnsemblBacteria" id="ABL70008">
    <property type="protein sequence ID" value="ABL70008"/>
    <property type="gene ID" value="Pden_1914"/>
</dbReference>
<dbReference type="GeneID" id="93450313"/>
<dbReference type="KEGG" id="pde:Pden_1914"/>
<dbReference type="eggNOG" id="ENOG502ZZUX">
    <property type="taxonomic scope" value="Bacteria"/>
</dbReference>
<dbReference type="HOGENOM" id="CLU_1395337_0_0_5"/>
<dbReference type="OrthoDB" id="9811954at2"/>
<dbReference type="Proteomes" id="UP000000361">
    <property type="component" value="Chromosome 1"/>
</dbReference>
<dbReference type="GO" id="GO:0005886">
    <property type="term" value="C:plasma membrane"/>
    <property type="evidence" value="ECO:0007669"/>
    <property type="project" value="UniProtKB-SubCell"/>
</dbReference>
<dbReference type="HAMAP" id="MF_01514">
    <property type="entry name" value="UPF0314"/>
    <property type="match status" value="1"/>
</dbReference>
<dbReference type="InterPro" id="IPR019691">
    <property type="entry name" value="DUF2585"/>
</dbReference>
<dbReference type="NCBIfam" id="NF002099">
    <property type="entry name" value="PRK00944.1"/>
    <property type="match status" value="1"/>
</dbReference>
<dbReference type="Pfam" id="PF10755">
    <property type="entry name" value="DUF2585"/>
    <property type="match status" value="1"/>
</dbReference>
<evidence type="ECO:0000255" key="1">
    <source>
        <dbReference type="HAMAP-Rule" id="MF_01514"/>
    </source>
</evidence>
<proteinExistence type="inferred from homology"/>
<name>Y1914_PARDP</name>
<sequence>MISPRIMFTRRSAPYWATFLVIVLAALWLLWIGREPICTCGSVKLWHGETMSSESSQHIADWYTPSHVIHGLVFYAALWLVAPRLSFGWRLAIATLVESAWEIVENSDAIIERYRAVTISLDYYGDSVLNSVSDILAMVLGFVLAARLPVWASVAIVIGFEALTTWLIRDGLALNVLMLLWPLEAVRGWQAAL</sequence>
<reference key="1">
    <citation type="submission" date="2006-12" db="EMBL/GenBank/DDBJ databases">
        <title>Complete sequence of chromosome 1 of Paracoccus denitrificans PD1222.</title>
        <authorList>
            <person name="Copeland A."/>
            <person name="Lucas S."/>
            <person name="Lapidus A."/>
            <person name="Barry K."/>
            <person name="Detter J.C."/>
            <person name="Glavina del Rio T."/>
            <person name="Hammon N."/>
            <person name="Israni S."/>
            <person name="Dalin E."/>
            <person name="Tice H."/>
            <person name="Pitluck S."/>
            <person name="Munk A.C."/>
            <person name="Brettin T."/>
            <person name="Bruce D."/>
            <person name="Han C."/>
            <person name="Tapia R."/>
            <person name="Gilna P."/>
            <person name="Schmutz J."/>
            <person name="Larimer F."/>
            <person name="Land M."/>
            <person name="Hauser L."/>
            <person name="Kyrpides N."/>
            <person name="Lykidis A."/>
            <person name="Spiro S."/>
            <person name="Richardson D.J."/>
            <person name="Moir J.W.B."/>
            <person name="Ferguson S.J."/>
            <person name="van Spanning R.J.M."/>
            <person name="Richardson P."/>
        </authorList>
    </citation>
    <scope>NUCLEOTIDE SEQUENCE [LARGE SCALE GENOMIC DNA]</scope>
    <source>
        <strain>Pd 1222</strain>
    </source>
</reference>